<dbReference type="EC" id="5.3.1.9" evidence="1"/>
<dbReference type="EMBL" id="AE017226">
    <property type="protein sequence ID" value="AAS13090.1"/>
    <property type="molecule type" value="Genomic_DNA"/>
</dbReference>
<dbReference type="RefSeq" id="NP_973171.1">
    <property type="nucleotide sequence ID" value="NC_002967.9"/>
</dbReference>
<dbReference type="RefSeq" id="WP_002680556.1">
    <property type="nucleotide sequence ID" value="NC_002967.9"/>
</dbReference>
<dbReference type="SMR" id="Q73K18"/>
<dbReference type="STRING" id="243275.TDE_2573"/>
<dbReference type="PaxDb" id="243275-TDE_2573"/>
<dbReference type="GeneID" id="2739938"/>
<dbReference type="KEGG" id="tde:TDE_2573"/>
<dbReference type="PATRIC" id="fig|243275.7.peg.2432"/>
<dbReference type="eggNOG" id="COG0166">
    <property type="taxonomic scope" value="Bacteria"/>
</dbReference>
<dbReference type="HOGENOM" id="CLU_017947_3_1_12"/>
<dbReference type="OrthoDB" id="140919at2"/>
<dbReference type="UniPathway" id="UPA00109">
    <property type="reaction ID" value="UER00181"/>
</dbReference>
<dbReference type="UniPathway" id="UPA00138"/>
<dbReference type="Proteomes" id="UP000008212">
    <property type="component" value="Chromosome"/>
</dbReference>
<dbReference type="GO" id="GO:0005829">
    <property type="term" value="C:cytosol"/>
    <property type="evidence" value="ECO:0007669"/>
    <property type="project" value="TreeGrafter"/>
</dbReference>
<dbReference type="GO" id="GO:0097367">
    <property type="term" value="F:carbohydrate derivative binding"/>
    <property type="evidence" value="ECO:0007669"/>
    <property type="project" value="InterPro"/>
</dbReference>
<dbReference type="GO" id="GO:0004347">
    <property type="term" value="F:glucose-6-phosphate isomerase activity"/>
    <property type="evidence" value="ECO:0007669"/>
    <property type="project" value="UniProtKB-UniRule"/>
</dbReference>
<dbReference type="GO" id="GO:0048029">
    <property type="term" value="F:monosaccharide binding"/>
    <property type="evidence" value="ECO:0007669"/>
    <property type="project" value="TreeGrafter"/>
</dbReference>
<dbReference type="GO" id="GO:0006094">
    <property type="term" value="P:gluconeogenesis"/>
    <property type="evidence" value="ECO:0007669"/>
    <property type="project" value="UniProtKB-UniRule"/>
</dbReference>
<dbReference type="GO" id="GO:0051156">
    <property type="term" value="P:glucose 6-phosphate metabolic process"/>
    <property type="evidence" value="ECO:0007669"/>
    <property type="project" value="TreeGrafter"/>
</dbReference>
<dbReference type="GO" id="GO:0006096">
    <property type="term" value="P:glycolytic process"/>
    <property type="evidence" value="ECO:0007669"/>
    <property type="project" value="UniProtKB-UniRule"/>
</dbReference>
<dbReference type="CDD" id="cd05015">
    <property type="entry name" value="SIS_PGI_1"/>
    <property type="match status" value="1"/>
</dbReference>
<dbReference type="CDD" id="cd05016">
    <property type="entry name" value="SIS_PGI_2"/>
    <property type="match status" value="1"/>
</dbReference>
<dbReference type="Gene3D" id="1.10.1390.10">
    <property type="match status" value="1"/>
</dbReference>
<dbReference type="Gene3D" id="3.40.50.10490">
    <property type="entry name" value="Glucose-6-phosphate isomerase like protein, domain 1"/>
    <property type="match status" value="2"/>
</dbReference>
<dbReference type="HAMAP" id="MF_00473">
    <property type="entry name" value="G6P_isomerase"/>
    <property type="match status" value="1"/>
</dbReference>
<dbReference type="InterPro" id="IPR001672">
    <property type="entry name" value="G6P_Isomerase"/>
</dbReference>
<dbReference type="InterPro" id="IPR023096">
    <property type="entry name" value="G6P_Isomerase_C"/>
</dbReference>
<dbReference type="InterPro" id="IPR018189">
    <property type="entry name" value="Phosphoglucose_isomerase_CS"/>
</dbReference>
<dbReference type="InterPro" id="IPR046348">
    <property type="entry name" value="SIS_dom_sf"/>
</dbReference>
<dbReference type="InterPro" id="IPR035476">
    <property type="entry name" value="SIS_PGI_1"/>
</dbReference>
<dbReference type="InterPro" id="IPR035482">
    <property type="entry name" value="SIS_PGI_2"/>
</dbReference>
<dbReference type="NCBIfam" id="NF010695">
    <property type="entry name" value="PRK14095.1"/>
    <property type="match status" value="1"/>
</dbReference>
<dbReference type="PANTHER" id="PTHR11469">
    <property type="entry name" value="GLUCOSE-6-PHOSPHATE ISOMERASE"/>
    <property type="match status" value="1"/>
</dbReference>
<dbReference type="PANTHER" id="PTHR11469:SF1">
    <property type="entry name" value="GLUCOSE-6-PHOSPHATE ISOMERASE"/>
    <property type="match status" value="1"/>
</dbReference>
<dbReference type="Pfam" id="PF00342">
    <property type="entry name" value="PGI"/>
    <property type="match status" value="1"/>
</dbReference>
<dbReference type="PRINTS" id="PR00662">
    <property type="entry name" value="G6PISOMERASE"/>
</dbReference>
<dbReference type="SUPFAM" id="SSF53697">
    <property type="entry name" value="SIS domain"/>
    <property type="match status" value="1"/>
</dbReference>
<dbReference type="PROSITE" id="PS00174">
    <property type="entry name" value="P_GLUCOSE_ISOMERASE_2"/>
    <property type="match status" value="1"/>
</dbReference>
<dbReference type="PROSITE" id="PS51463">
    <property type="entry name" value="P_GLUCOSE_ISOMERASE_3"/>
    <property type="match status" value="1"/>
</dbReference>
<gene>
    <name evidence="1" type="primary">pgi</name>
    <name type="ordered locus">TDE_2573</name>
</gene>
<protein>
    <recommendedName>
        <fullName evidence="1">Glucose-6-phosphate isomerase</fullName>
        <shortName evidence="1">GPI</shortName>
        <ecNumber evidence="1">5.3.1.9</ecNumber>
    </recommendedName>
    <alternativeName>
        <fullName evidence="1">Phosphoglucose isomerase</fullName>
        <shortName evidence="1">PGI</shortName>
    </alternativeName>
    <alternativeName>
        <fullName evidence="1">Phosphohexose isomerase</fullName>
        <shortName evidence="1">PHI</shortName>
    </alternativeName>
</protein>
<name>G6PI_TREDE</name>
<sequence length="525" mass="58030">MEWKNLDKCTSFTQLQKAHKEQAENLKLADIFDTENSVKRVKNYSVKMGGNLKYNYAAKPVNDEILKALQSLADEQKLIEKYELLLNGDFINTGENRMVLHQLTRGQLKNDVVYKGVNMRSFYLNELKKIKEFSEAVHSGKIKTSQGKVFTDVVQIGIGGSDLGPRAMYIALKNRAKKKMRAHFISNVDPDDAAEVLNSINLASTLFILVSKSGTTQETLANERFVKSVLEKNGLDCKKQMLAVTSETSPLANNPDYLTSFYMDDFIGGRYSSTSVCGAAVLALAFGMETVEAFLKGAAEGDKLSLNKNIKENASLLDALLGVYERNILGCSATAILPYSQALSRFPAHLQQLDMESNGKTVNRFGEKVSYKTGPVIFGEPGTNGQHSFYQLLHQGSDIIPLQFIGFKKSQIGLDIESEGSTNMQKLNANLAAQIMAFAAGKTDENKNKDFAGNRPASLIYGEELNPENLGALLAHYENKVMFQGFIWNLNSFDQEGVQLGKTLAKKVLSNDMPPALKAFSEFLL</sequence>
<reference key="1">
    <citation type="journal article" date="2004" name="Proc. Natl. Acad. Sci. U.S.A.">
        <title>Comparison of the genome of the oral pathogen Treponema denticola with other spirochete genomes.</title>
        <authorList>
            <person name="Seshadri R."/>
            <person name="Myers G.S.A."/>
            <person name="Tettelin H."/>
            <person name="Eisen J.A."/>
            <person name="Heidelberg J.F."/>
            <person name="Dodson R.J."/>
            <person name="Davidsen T.M."/>
            <person name="DeBoy R.T."/>
            <person name="Fouts D.E."/>
            <person name="Haft D.H."/>
            <person name="Selengut J."/>
            <person name="Ren Q."/>
            <person name="Brinkac L.M."/>
            <person name="Madupu R."/>
            <person name="Kolonay J.F."/>
            <person name="Durkin S.A."/>
            <person name="Daugherty S.C."/>
            <person name="Shetty J."/>
            <person name="Shvartsbeyn A."/>
            <person name="Gebregeorgis E."/>
            <person name="Geer K."/>
            <person name="Tsegaye G."/>
            <person name="Malek J.A."/>
            <person name="Ayodeji B."/>
            <person name="Shatsman S."/>
            <person name="McLeod M.P."/>
            <person name="Smajs D."/>
            <person name="Howell J.K."/>
            <person name="Pal S."/>
            <person name="Amin A."/>
            <person name="Vashisth P."/>
            <person name="McNeill T.Z."/>
            <person name="Xiang Q."/>
            <person name="Sodergren E."/>
            <person name="Baca E."/>
            <person name="Weinstock G.M."/>
            <person name="Norris S.J."/>
            <person name="Fraser C.M."/>
            <person name="Paulsen I.T."/>
        </authorList>
    </citation>
    <scope>NUCLEOTIDE SEQUENCE [LARGE SCALE GENOMIC DNA]</scope>
    <source>
        <strain>ATCC 35405 / DSM 14222 / CIP 103919 / JCM 8153 / KCTC 15104</strain>
    </source>
</reference>
<feature type="chain" id="PRO_0000180760" description="Glucose-6-phosphate isomerase">
    <location>
        <begin position="1"/>
        <end position="525"/>
    </location>
</feature>
<feature type="active site" description="Proton donor" evidence="1">
    <location>
        <position position="356"/>
    </location>
</feature>
<feature type="active site" evidence="1">
    <location>
        <position position="387"/>
    </location>
</feature>
<feature type="active site" evidence="1">
    <location>
        <position position="502"/>
    </location>
</feature>
<comment type="function">
    <text evidence="1">Catalyzes the reversible isomerization of glucose-6-phosphate to fructose-6-phosphate.</text>
</comment>
<comment type="catalytic activity">
    <reaction evidence="1">
        <text>alpha-D-glucose 6-phosphate = beta-D-fructose 6-phosphate</text>
        <dbReference type="Rhea" id="RHEA:11816"/>
        <dbReference type="ChEBI" id="CHEBI:57634"/>
        <dbReference type="ChEBI" id="CHEBI:58225"/>
        <dbReference type="EC" id="5.3.1.9"/>
    </reaction>
</comment>
<comment type="pathway">
    <text evidence="1">Carbohydrate biosynthesis; gluconeogenesis.</text>
</comment>
<comment type="pathway">
    <text evidence="1">Carbohydrate degradation; glycolysis; D-glyceraldehyde 3-phosphate and glycerone phosphate from D-glucose: step 2/4.</text>
</comment>
<comment type="subcellular location">
    <subcellularLocation>
        <location evidence="1">Cytoplasm</location>
    </subcellularLocation>
</comment>
<comment type="similarity">
    <text evidence="1">Belongs to the GPI family.</text>
</comment>
<organism>
    <name type="scientific">Treponema denticola (strain ATCC 35405 / DSM 14222 / CIP 103919 / JCM 8153 / KCTC 15104)</name>
    <dbReference type="NCBI Taxonomy" id="243275"/>
    <lineage>
        <taxon>Bacteria</taxon>
        <taxon>Pseudomonadati</taxon>
        <taxon>Spirochaetota</taxon>
        <taxon>Spirochaetia</taxon>
        <taxon>Spirochaetales</taxon>
        <taxon>Treponemataceae</taxon>
        <taxon>Treponema</taxon>
    </lineage>
</organism>
<evidence type="ECO:0000255" key="1">
    <source>
        <dbReference type="HAMAP-Rule" id="MF_00473"/>
    </source>
</evidence>
<accession>Q73K18</accession>
<proteinExistence type="inferred from homology"/>
<keyword id="KW-0963">Cytoplasm</keyword>
<keyword id="KW-0312">Gluconeogenesis</keyword>
<keyword id="KW-0324">Glycolysis</keyword>
<keyword id="KW-0413">Isomerase</keyword>
<keyword id="KW-1185">Reference proteome</keyword>